<protein>
    <recommendedName>
        <fullName evidence="1">Glutathione-regulated potassium-efflux system protein KefB</fullName>
    </recommendedName>
    <alternativeName>
        <fullName evidence="1">K(+)/H(+) antiporter</fullName>
    </alternativeName>
</protein>
<sequence length="601" mass="66430">MEGADLLTAGVLFLFAAVAAVPLAARLGIGAVLGYLLAGIAIGPWGLGFISDVDEILHFSELGVVFLMFIIGLELNPSRLWQLRRSIFGVGAAQVLLSAAVLAGLLMLADFLWQAAVVGGIGLAMSSTAMALQLMREKGMNRSESGQLGFSVLLFQDLAVIPALALVPLLAGSVDEHFDWFKVAMKVLAFAVMLIGGRYLLRPVFRFIAASGVREVFTAATLLLVLSAALFMDALGLSMALGTFIAGVLLAESEYRHELENAIDPFKGLLLGLFFISVGMSLNLGVLYTHLLWVAASVVILVVIKMLTLYLLARLYGIRSSERMQFASVLSQGGEFAFVLFSTASSQRLFQGDQMALLLVTVTLSMMTTPLLMKGIDKWLSRRLNGPEENDEKPWVEDDKPQVIVVGFGRFGQVIARLLMANKMRITVLERDIGAVNLMRKYGYKVYYGDATQVELLRSAGAEAAESIVITCNEPEDTMKLVALCQQHFPHLHILARARGRVEAHELLQAGVTQFSRETFSSALELGRKTLVSLGMHPHQAQRAQLHFRRLDMRMLRELIPEHSDMVQISRAREARRELEEIFQREMQQERRQLDGWDEFE</sequence>
<proteinExistence type="inferred from homology"/>
<dbReference type="EMBL" id="CP001120">
    <property type="protein sequence ID" value="ACF67684.1"/>
    <property type="molecule type" value="Genomic_DNA"/>
</dbReference>
<dbReference type="RefSeq" id="WP_000398141.1">
    <property type="nucleotide sequence ID" value="NC_011083.1"/>
</dbReference>
<dbReference type="SMR" id="B4TKN2"/>
<dbReference type="KEGG" id="seh:SeHA_C3762"/>
<dbReference type="HOGENOM" id="CLU_005126_9_3_6"/>
<dbReference type="Proteomes" id="UP000001866">
    <property type="component" value="Chromosome"/>
</dbReference>
<dbReference type="GO" id="GO:0005886">
    <property type="term" value="C:plasma membrane"/>
    <property type="evidence" value="ECO:0007669"/>
    <property type="project" value="UniProtKB-SubCell"/>
</dbReference>
<dbReference type="GO" id="GO:0015503">
    <property type="term" value="F:glutathione-regulated potassium exporter activity"/>
    <property type="evidence" value="ECO:0007669"/>
    <property type="project" value="UniProtKB-UniRule"/>
</dbReference>
<dbReference type="GO" id="GO:1902600">
    <property type="term" value="P:proton transmembrane transport"/>
    <property type="evidence" value="ECO:0007669"/>
    <property type="project" value="InterPro"/>
</dbReference>
<dbReference type="FunFam" id="1.20.1530.20:FF:000001">
    <property type="entry name" value="Glutathione-regulated potassium-efflux system protein KefB"/>
    <property type="match status" value="1"/>
</dbReference>
<dbReference type="FunFam" id="3.40.50.720:FF:000036">
    <property type="entry name" value="Glutathione-regulated potassium-efflux system protein KefB"/>
    <property type="match status" value="1"/>
</dbReference>
<dbReference type="Gene3D" id="1.20.1530.20">
    <property type="match status" value="1"/>
</dbReference>
<dbReference type="Gene3D" id="3.40.50.720">
    <property type="entry name" value="NAD(P)-binding Rossmann-like Domain"/>
    <property type="match status" value="1"/>
</dbReference>
<dbReference type="HAMAP" id="MF_01412">
    <property type="entry name" value="K_H_efflux_KefB"/>
    <property type="match status" value="1"/>
</dbReference>
<dbReference type="InterPro" id="IPR006153">
    <property type="entry name" value="Cation/H_exchanger_TM"/>
</dbReference>
<dbReference type="InterPro" id="IPR004771">
    <property type="entry name" value="K/H_exchanger"/>
</dbReference>
<dbReference type="InterPro" id="IPR020884">
    <property type="entry name" value="K_H_efflux_KefB"/>
</dbReference>
<dbReference type="InterPro" id="IPR006036">
    <property type="entry name" value="K_uptake_TrkA"/>
</dbReference>
<dbReference type="InterPro" id="IPR038770">
    <property type="entry name" value="Na+/solute_symporter_sf"/>
</dbReference>
<dbReference type="InterPro" id="IPR036291">
    <property type="entry name" value="NAD(P)-bd_dom_sf"/>
</dbReference>
<dbReference type="InterPro" id="IPR003148">
    <property type="entry name" value="RCK_N"/>
</dbReference>
<dbReference type="NCBIfam" id="TIGR00932">
    <property type="entry name" value="2a37"/>
    <property type="match status" value="1"/>
</dbReference>
<dbReference type="NCBIfam" id="NF002973">
    <property type="entry name" value="PRK03659.1"/>
    <property type="match status" value="1"/>
</dbReference>
<dbReference type="PANTHER" id="PTHR46157">
    <property type="entry name" value="K(+) EFFLUX ANTIPORTER 3, CHLOROPLASTIC"/>
    <property type="match status" value="1"/>
</dbReference>
<dbReference type="PANTHER" id="PTHR46157:SF4">
    <property type="entry name" value="K(+) EFFLUX ANTIPORTER 3, CHLOROPLASTIC"/>
    <property type="match status" value="1"/>
</dbReference>
<dbReference type="Pfam" id="PF00999">
    <property type="entry name" value="Na_H_Exchanger"/>
    <property type="match status" value="1"/>
</dbReference>
<dbReference type="Pfam" id="PF02254">
    <property type="entry name" value="TrkA_N"/>
    <property type="match status" value="1"/>
</dbReference>
<dbReference type="PRINTS" id="PR00335">
    <property type="entry name" value="KUPTAKETRKA"/>
</dbReference>
<dbReference type="SUPFAM" id="SSF51735">
    <property type="entry name" value="NAD(P)-binding Rossmann-fold domains"/>
    <property type="match status" value="1"/>
</dbReference>
<dbReference type="PROSITE" id="PS51201">
    <property type="entry name" value="RCK_N"/>
    <property type="match status" value="1"/>
</dbReference>
<keyword id="KW-0050">Antiport</keyword>
<keyword id="KW-0997">Cell inner membrane</keyword>
<keyword id="KW-1003">Cell membrane</keyword>
<keyword id="KW-0406">Ion transport</keyword>
<keyword id="KW-0472">Membrane</keyword>
<keyword id="KW-0630">Potassium</keyword>
<keyword id="KW-0633">Potassium transport</keyword>
<keyword id="KW-0812">Transmembrane</keyword>
<keyword id="KW-1133">Transmembrane helix</keyword>
<keyword id="KW-0813">Transport</keyword>
<feature type="chain" id="PRO_1000145528" description="Glutathione-regulated potassium-efflux system protein KefB">
    <location>
        <begin position="1"/>
        <end position="601"/>
    </location>
</feature>
<feature type="transmembrane region" description="Helical" evidence="1">
    <location>
        <begin position="4"/>
        <end position="24"/>
    </location>
</feature>
<feature type="transmembrane region" description="Helical" evidence="1">
    <location>
        <begin position="29"/>
        <end position="49"/>
    </location>
</feature>
<feature type="transmembrane region" description="Helical" evidence="1">
    <location>
        <begin position="55"/>
        <end position="75"/>
    </location>
</feature>
<feature type="transmembrane region" description="Helical" evidence="1">
    <location>
        <begin position="87"/>
        <end position="107"/>
    </location>
</feature>
<feature type="transmembrane region" description="Helical" evidence="1">
    <location>
        <begin position="111"/>
        <end position="131"/>
    </location>
</feature>
<feature type="transmembrane region" description="Helical" evidence="1">
    <location>
        <begin position="152"/>
        <end position="172"/>
    </location>
</feature>
<feature type="transmembrane region" description="Helical" evidence="1">
    <location>
        <begin position="177"/>
        <end position="197"/>
    </location>
</feature>
<feature type="transmembrane region" description="Helical" evidence="1">
    <location>
        <begin position="207"/>
        <end position="227"/>
    </location>
</feature>
<feature type="transmembrane region" description="Helical" evidence="1">
    <location>
        <begin position="230"/>
        <end position="250"/>
    </location>
</feature>
<feature type="transmembrane region" description="Helical" evidence="1">
    <location>
        <begin position="262"/>
        <end position="282"/>
    </location>
</feature>
<feature type="transmembrane region" description="Helical" evidence="1">
    <location>
        <begin position="284"/>
        <end position="304"/>
    </location>
</feature>
<feature type="transmembrane region" description="Helical" evidence="1">
    <location>
        <begin position="324"/>
        <end position="344"/>
    </location>
</feature>
<feature type="transmembrane region" description="Helical" evidence="1">
    <location>
        <begin position="356"/>
        <end position="376"/>
    </location>
</feature>
<feature type="domain" description="RCK N-terminal" evidence="2">
    <location>
        <begin position="400"/>
        <end position="519"/>
    </location>
</feature>
<organism>
    <name type="scientific">Salmonella heidelberg (strain SL476)</name>
    <dbReference type="NCBI Taxonomy" id="454169"/>
    <lineage>
        <taxon>Bacteria</taxon>
        <taxon>Pseudomonadati</taxon>
        <taxon>Pseudomonadota</taxon>
        <taxon>Gammaproteobacteria</taxon>
        <taxon>Enterobacterales</taxon>
        <taxon>Enterobacteriaceae</taxon>
        <taxon>Salmonella</taxon>
    </lineage>
</organism>
<evidence type="ECO:0000255" key="1">
    <source>
        <dbReference type="HAMAP-Rule" id="MF_01412"/>
    </source>
</evidence>
<evidence type="ECO:0000255" key="2">
    <source>
        <dbReference type="PROSITE-ProRule" id="PRU00543"/>
    </source>
</evidence>
<gene>
    <name evidence="1" type="primary">kefB</name>
    <name type="ordered locus">SeHA_C3762</name>
</gene>
<name>KEFB_SALHS</name>
<comment type="function">
    <text evidence="1">Pore-forming subunit of a potassium efflux system that confers protection against electrophiles. Catalyzes K(+)/H(+) antiport.</text>
</comment>
<comment type="subunit">
    <text evidence="1">Interacts with the regulatory subunit KefG.</text>
</comment>
<comment type="subcellular location">
    <subcellularLocation>
        <location evidence="1">Cell inner membrane</location>
        <topology evidence="1">Multi-pass membrane protein</topology>
    </subcellularLocation>
</comment>
<comment type="similarity">
    <text evidence="1">Belongs to the monovalent cation:proton antiporter 2 (CPA2) transporter (TC 2.A.37) family. KefB subfamily.</text>
</comment>
<accession>B4TKN2</accession>
<reference key="1">
    <citation type="journal article" date="2011" name="J. Bacteriol.">
        <title>Comparative genomics of 28 Salmonella enterica isolates: evidence for CRISPR-mediated adaptive sublineage evolution.</title>
        <authorList>
            <person name="Fricke W.F."/>
            <person name="Mammel M.K."/>
            <person name="McDermott P.F."/>
            <person name="Tartera C."/>
            <person name="White D.G."/>
            <person name="Leclerc J.E."/>
            <person name="Ravel J."/>
            <person name="Cebula T.A."/>
        </authorList>
    </citation>
    <scope>NUCLEOTIDE SEQUENCE [LARGE SCALE GENOMIC DNA]</scope>
    <source>
        <strain>SL476</strain>
    </source>
</reference>